<comment type="function">
    <text evidence="4 5">Specific receptor for the siderophore ferric enterobactin.</text>
</comment>
<comment type="subcellular location">
    <subcellularLocation>
        <location evidence="2">Cell outer membrane</location>
        <topology evidence="2">Multi-pass membrane protein</topology>
    </subcellularLocation>
</comment>
<comment type="induction">
    <text evidence="5">By iron and enterobactin.</text>
</comment>
<comment type="disruption phenotype">
    <text evidence="4">In a pvdD and pchEF double mutant background, when grown in iron restricted culture, able to grow in the presence of enterobactin or various synthetic catecholates, but fails to grow when enterobactin receptor pirA is also deleted.</text>
</comment>
<comment type="similarity">
    <text evidence="6">Belongs to the TonB-dependent receptor family.</text>
</comment>
<sequence>MSSRALPAVPFLLLSSCLLANAVHAAGQGDGSVIELGEQTVVATAQEETKQAPGVSIITAEDIAKRPPSNDLSQIIRTMPGVNLTGNSSSGQRGNNRQIDIRGMGPENTLILVDGKPVSSRNSVRYGWRGERDSRGDTNWVPADQVERIEVIRGPAAARYGNGAAGGVVNIITKQAGAETHGNLSVYSNFPQHKAEGASERMSFGLNGPLTENLSYRVYGNIAKTDSDDWDINAGHESNRTGKQAGTLPAGREGVRNKDIDGLLSWRLTPEQTLEFEAGFSRQGNIYTGDTQNTNSNNYVKQMLGHETNRMYRETYSVTHRGEWDFGSSLAYLQYEKTRNSRINEGLAGGTEGIFDPNNAGFYTATLRDLTAHGEVNLPLHLGYEQTLTLGSEWTEQKLDDPSSNTQNTEEGGSIPGLAGKNRSSSSSARIFSLFAEDNIELMPGTMLTPGLRWDHHDIVGDNWSPSLNLSHALTERVTLKAGIARAYKAPNLYQLNPDYLLYSRGQGCYGQSTSCYLRGNDGLKAETSVNKELGIEYSHDGLVAGLTYFRNDYKNKIESGLSPVDHASGGKGDYANAAIYQWENVPKAVVEGLEGTLTLPLADGLKWSNNLTYMLQSKNKETGDVLSVTPRYTLNSMLDWQATDDLSLQATVTWYGKQKPKKYDYHGDRVTGSANDQLSPYAIAGLGGTYRLSKNLSLGAGVDNLFDKRLFRAGNAQGVVGIDGAGAATYNEPGRTFYTSLTASF</sequence>
<accession>Q05098</accession>
<protein>
    <recommendedName>
        <fullName>Ferric enterobactin receptor</fullName>
    </recommendedName>
</protein>
<dbReference type="EMBL" id="M98033">
    <property type="protein sequence ID" value="AAA25928.1"/>
    <property type="molecule type" value="Genomic_DNA"/>
</dbReference>
<dbReference type="EMBL" id="AE004091">
    <property type="protein sequence ID" value="AAG06076.1"/>
    <property type="molecule type" value="Genomic_DNA"/>
</dbReference>
<dbReference type="PIR" id="A40636">
    <property type="entry name" value="A40636"/>
</dbReference>
<dbReference type="RefSeq" id="NP_251378.1">
    <property type="nucleotide sequence ID" value="NC_002516.2"/>
</dbReference>
<dbReference type="RefSeq" id="WP_003113404.1">
    <property type="nucleotide sequence ID" value="NZ_QZGE01000008.1"/>
</dbReference>
<dbReference type="PDB" id="5M9B">
    <property type="method" value="X-ray"/>
    <property type="resolution" value="2.12 A"/>
    <property type="chains" value="A=26-746"/>
</dbReference>
<dbReference type="PDB" id="5MZS">
    <property type="method" value="X-ray"/>
    <property type="resolution" value="2.67 A"/>
    <property type="chains" value="A=26-746"/>
</dbReference>
<dbReference type="PDB" id="5NC3">
    <property type="method" value="X-ray"/>
    <property type="resolution" value="2.57 A"/>
    <property type="chains" value="A=26-746"/>
</dbReference>
<dbReference type="PDB" id="5NC4">
    <property type="method" value="X-ray"/>
    <property type="resolution" value="2.80 A"/>
    <property type="chains" value="A=26-746"/>
</dbReference>
<dbReference type="PDB" id="5NR2">
    <property type="method" value="X-ray"/>
    <property type="resolution" value="2.78 A"/>
    <property type="chains" value="A=26-746"/>
</dbReference>
<dbReference type="PDB" id="5OUT">
    <property type="method" value="X-ray"/>
    <property type="resolution" value="2.90 A"/>
    <property type="chains" value="A=26-746"/>
</dbReference>
<dbReference type="PDB" id="6I2J">
    <property type="method" value="X-ray"/>
    <property type="resolution" value="2.96 A"/>
    <property type="chains" value="A=26-746"/>
</dbReference>
<dbReference type="PDB" id="6Q5E">
    <property type="method" value="X-ray"/>
    <property type="resolution" value="2.70 A"/>
    <property type="chains" value="A=26-746"/>
</dbReference>
<dbReference type="PDB" id="6R1F">
    <property type="method" value="X-ray"/>
    <property type="resolution" value="3.11 A"/>
    <property type="chains" value="A=26-746"/>
</dbReference>
<dbReference type="PDB" id="6Y47">
    <property type="method" value="X-ray"/>
    <property type="resolution" value="3.04 A"/>
    <property type="chains" value="A=26-746"/>
</dbReference>
<dbReference type="PDB" id="6YY5">
    <property type="method" value="X-ray"/>
    <property type="resolution" value="2.72 A"/>
    <property type="chains" value="AAA=26-746"/>
</dbReference>
<dbReference type="PDB" id="6Z2N">
    <property type="method" value="X-ray"/>
    <property type="resolution" value="3.03 A"/>
    <property type="chains" value="AAA=26-746"/>
</dbReference>
<dbReference type="PDB" id="6Z33">
    <property type="method" value="X-ray"/>
    <property type="resolution" value="2.71 A"/>
    <property type="chains" value="AAA=26-746"/>
</dbReference>
<dbReference type="PDB" id="7OBW">
    <property type="method" value="X-ray"/>
    <property type="resolution" value="2.66 A"/>
    <property type="chains" value="AAA=26-746"/>
</dbReference>
<dbReference type="PDBsum" id="5M9B"/>
<dbReference type="PDBsum" id="5MZS"/>
<dbReference type="PDBsum" id="5NC3"/>
<dbReference type="PDBsum" id="5NC4"/>
<dbReference type="PDBsum" id="5NR2"/>
<dbReference type="PDBsum" id="5OUT"/>
<dbReference type="PDBsum" id="6I2J"/>
<dbReference type="PDBsum" id="6Q5E"/>
<dbReference type="PDBsum" id="6R1F"/>
<dbReference type="PDBsum" id="6Y47"/>
<dbReference type="PDBsum" id="6YY5"/>
<dbReference type="PDBsum" id="6Z2N"/>
<dbReference type="PDBsum" id="6Z33"/>
<dbReference type="PDBsum" id="7OBW"/>
<dbReference type="SMR" id="Q05098"/>
<dbReference type="FunCoup" id="Q05098">
    <property type="interactions" value="172"/>
</dbReference>
<dbReference type="STRING" id="208964.PA2688"/>
<dbReference type="TCDB" id="1.B.14.1.5">
    <property type="family name" value="the outer membrane receptor (omr) family"/>
</dbReference>
<dbReference type="PaxDb" id="208964-PA2688"/>
<dbReference type="GeneID" id="882784"/>
<dbReference type="KEGG" id="pae:PA2688"/>
<dbReference type="PATRIC" id="fig|208964.12.peg.2813"/>
<dbReference type="PseudoCAP" id="PA2688"/>
<dbReference type="HOGENOM" id="CLU_008287_18_2_6"/>
<dbReference type="InParanoid" id="Q05098"/>
<dbReference type="OrthoDB" id="9764669at2"/>
<dbReference type="PhylomeDB" id="Q05098"/>
<dbReference type="BioCyc" id="PAER208964:G1FZ6-2728-MONOMER"/>
<dbReference type="Proteomes" id="UP000002438">
    <property type="component" value="Chromosome"/>
</dbReference>
<dbReference type="GO" id="GO:0009279">
    <property type="term" value="C:cell outer membrane"/>
    <property type="evidence" value="ECO:0000318"/>
    <property type="project" value="GO_Central"/>
</dbReference>
<dbReference type="GO" id="GO:0019867">
    <property type="term" value="C:outer membrane"/>
    <property type="evidence" value="ECO:0000314"/>
    <property type="project" value="PseudoCAP"/>
</dbReference>
<dbReference type="GO" id="GO:0042912">
    <property type="term" value="F:colicin transmembrane transporter activity"/>
    <property type="evidence" value="ECO:0000318"/>
    <property type="project" value="GO_Central"/>
</dbReference>
<dbReference type="GO" id="GO:1903981">
    <property type="term" value="F:enterobactin binding"/>
    <property type="evidence" value="ECO:0000314"/>
    <property type="project" value="UniProtKB"/>
</dbReference>
<dbReference type="GO" id="GO:0042931">
    <property type="term" value="F:enterobactin transmembrane transporter activity"/>
    <property type="evidence" value="ECO:0000315"/>
    <property type="project" value="PseudoCAP"/>
</dbReference>
<dbReference type="GO" id="GO:0015344">
    <property type="term" value="F:siderophore uptake transmembrane transporter activity"/>
    <property type="evidence" value="ECO:0000315"/>
    <property type="project" value="PseudoCAP"/>
</dbReference>
<dbReference type="GO" id="GO:0038023">
    <property type="term" value="F:signaling receptor activity"/>
    <property type="evidence" value="ECO:0007669"/>
    <property type="project" value="InterPro"/>
</dbReference>
<dbReference type="GO" id="GO:0042930">
    <property type="term" value="P:enterobactin transport"/>
    <property type="evidence" value="ECO:0000315"/>
    <property type="project" value="PseudoCAP"/>
</dbReference>
<dbReference type="GO" id="GO:0044718">
    <property type="term" value="P:siderophore transmembrane transport"/>
    <property type="evidence" value="ECO:0000318"/>
    <property type="project" value="GO_Central"/>
</dbReference>
<dbReference type="GO" id="GO:0015891">
    <property type="term" value="P:siderophore transport"/>
    <property type="evidence" value="ECO:0000315"/>
    <property type="project" value="PseudoCAP"/>
</dbReference>
<dbReference type="CDD" id="cd01347">
    <property type="entry name" value="ligand_gated_channel"/>
    <property type="match status" value="1"/>
</dbReference>
<dbReference type="FunFam" id="2.40.170.20:FF:000002">
    <property type="entry name" value="Colicin I TonB-dependent receptor"/>
    <property type="match status" value="1"/>
</dbReference>
<dbReference type="Gene3D" id="2.40.170.20">
    <property type="entry name" value="TonB-dependent receptor, beta-barrel domain"/>
    <property type="match status" value="1"/>
</dbReference>
<dbReference type="Gene3D" id="2.170.130.10">
    <property type="entry name" value="TonB-dependent receptor, plug domain"/>
    <property type="match status" value="1"/>
</dbReference>
<dbReference type="InterPro" id="IPR012910">
    <property type="entry name" value="Plug_dom"/>
</dbReference>
<dbReference type="InterPro" id="IPR037066">
    <property type="entry name" value="Plug_dom_sf"/>
</dbReference>
<dbReference type="InterPro" id="IPR039426">
    <property type="entry name" value="TonB-dep_rcpt-like"/>
</dbReference>
<dbReference type="InterPro" id="IPR000531">
    <property type="entry name" value="TonB-dep_rcpt_b-brl"/>
</dbReference>
<dbReference type="InterPro" id="IPR036942">
    <property type="entry name" value="TonB_rcpt_b-brl_sf"/>
</dbReference>
<dbReference type="InterPro" id="IPR010917">
    <property type="entry name" value="TonB_rcpt_CS"/>
</dbReference>
<dbReference type="InterPro" id="IPR010105">
    <property type="entry name" value="TonB_sidphr_rcpt"/>
</dbReference>
<dbReference type="NCBIfam" id="NF010048">
    <property type="entry name" value="PRK13524.1"/>
    <property type="match status" value="1"/>
</dbReference>
<dbReference type="NCBIfam" id="NF010051">
    <property type="entry name" value="PRK13528.1"/>
    <property type="match status" value="1"/>
</dbReference>
<dbReference type="NCBIfam" id="TIGR01783">
    <property type="entry name" value="TonB-siderophor"/>
    <property type="match status" value="1"/>
</dbReference>
<dbReference type="PANTHER" id="PTHR30069:SF51">
    <property type="entry name" value="FERRIENTEROBACTIN RECEPTOR"/>
    <property type="match status" value="1"/>
</dbReference>
<dbReference type="PANTHER" id="PTHR30069">
    <property type="entry name" value="TONB-DEPENDENT OUTER MEMBRANE RECEPTOR"/>
    <property type="match status" value="1"/>
</dbReference>
<dbReference type="Pfam" id="PF07715">
    <property type="entry name" value="Plug"/>
    <property type="match status" value="1"/>
</dbReference>
<dbReference type="Pfam" id="PF00593">
    <property type="entry name" value="TonB_dep_Rec_b-barrel"/>
    <property type="match status" value="1"/>
</dbReference>
<dbReference type="SUPFAM" id="SSF56935">
    <property type="entry name" value="Porins"/>
    <property type="match status" value="1"/>
</dbReference>
<dbReference type="PROSITE" id="PS01156">
    <property type="entry name" value="TONB_DEPENDENT_REC_2"/>
    <property type="match status" value="1"/>
</dbReference>
<dbReference type="PROSITE" id="PS52016">
    <property type="entry name" value="TONB_DEPENDENT_REC_3"/>
    <property type="match status" value="1"/>
</dbReference>
<gene>
    <name type="primary">pfeA</name>
    <name type="ordered locus">PA2688</name>
</gene>
<evidence type="ECO:0000255" key="1"/>
<evidence type="ECO:0000255" key="2">
    <source>
        <dbReference type="PROSITE-ProRule" id="PRU01360"/>
    </source>
</evidence>
<evidence type="ECO:0000256" key="3">
    <source>
        <dbReference type="SAM" id="MobiDB-lite"/>
    </source>
</evidence>
<evidence type="ECO:0000269" key="4">
    <source>
    </source>
</evidence>
<evidence type="ECO:0000269" key="5">
    <source>
    </source>
</evidence>
<evidence type="ECO:0000305" key="6"/>
<evidence type="ECO:0007829" key="7">
    <source>
        <dbReference type="PDB" id="5M9B"/>
    </source>
</evidence>
<evidence type="ECO:0007829" key="8">
    <source>
        <dbReference type="PDB" id="5NC3"/>
    </source>
</evidence>
<evidence type="ECO:0007829" key="9">
    <source>
        <dbReference type="PDB" id="5OUT"/>
    </source>
</evidence>
<evidence type="ECO:0007829" key="10">
    <source>
        <dbReference type="PDB" id="6Y47"/>
    </source>
</evidence>
<keyword id="KW-0002">3D-structure</keyword>
<keyword id="KW-0998">Cell outer membrane</keyword>
<keyword id="KW-0406">Ion transport</keyword>
<keyword id="KW-0408">Iron</keyword>
<keyword id="KW-0410">Iron transport</keyword>
<keyword id="KW-0472">Membrane</keyword>
<keyword id="KW-0675">Receptor</keyword>
<keyword id="KW-1185">Reference proteome</keyword>
<keyword id="KW-0732">Signal</keyword>
<keyword id="KW-0798">TonB box</keyword>
<keyword id="KW-0812">Transmembrane</keyword>
<keyword id="KW-1134">Transmembrane beta strand</keyword>
<keyword id="KW-0813">Transport</keyword>
<name>PFEA_PSEAE</name>
<feature type="signal peptide" evidence="1">
    <location>
        <begin position="1"/>
        <end position="25"/>
    </location>
</feature>
<feature type="chain" id="PRO_0000034769" description="Ferric enterobactin receptor">
    <location>
        <begin position="26"/>
        <end position="746"/>
    </location>
</feature>
<feature type="domain" description="TBDR plug" evidence="2">
    <location>
        <begin position="47"/>
        <end position="174"/>
    </location>
</feature>
<feature type="domain" description="TBDR beta-barrel" evidence="2">
    <location>
        <begin position="179"/>
        <end position="746"/>
    </location>
</feature>
<feature type="region of interest" description="Disordered" evidence="3">
    <location>
        <begin position="82"/>
        <end position="102"/>
    </location>
</feature>
<feature type="region of interest" description="Disordered" evidence="3">
    <location>
        <begin position="235"/>
        <end position="254"/>
    </location>
</feature>
<feature type="region of interest" description="Disordered" evidence="3">
    <location>
        <begin position="397"/>
        <end position="424"/>
    </location>
</feature>
<feature type="short sequence motif" description="TonB box">
    <location>
        <begin position="39"/>
        <end position="44"/>
    </location>
</feature>
<feature type="short sequence motif" description="TonB C-terminal box">
    <location>
        <begin position="729"/>
        <end position="746"/>
    </location>
</feature>
<feature type="compositionally biased region" description="Polar residues" evidence="3">
    <location>
        <begin position="84"/>
        <end position="98"/>
    </location>
</feature>
<feature type="compositionally biased region" description="Polar residues" evidence="3">
    <location>
        <begin position="402"/>
        <end position="411"/>
    </location>
</feature>
<feature type="helix" evidence="7">
    <location>
        <begin position="45"/>
        <end position="48"/>
    </location>
</feature>
<feature type="helix" evidence="7">
    <location>
        <begin position="49"/>
        <end position="51"/>
    </location>
</feature>
<feature type="strand" evidence="7">
    <location>
        <begin position="55"/>
        <end position="59"/>
    </location>
</feature>
<feature type="helix" evidence="7">
    <location>
        <begin position="60"/>
        <end position="65"/>
    </location>
</feature>
<feature type="strand" evidence="7">
    <location>
        <begin position="69"/>
        <end position="71"/>
    </location>
</feature>
<feature type="helix" evidence="7">
    <location>
        <begin position="73"/>
        <end position="76"/>
    </location>
</feature>
<feature type="strand" evidence="7">
    <location>
        <begin position="82"/>
        <end position="85"/>
    </location>
</feature>
<feature type="strand" evidence="8">
    <location>
        <begin position="87"/>
        <end position="90"/>
    </location>
</feature>
<feature type="turn" evidence="7">
    <location>
        <begin position="92"/>
        <end position="95"/>
    </location>
</feature>
<feature type="strand" evidence="7">
    <location>
        <begin position="98"/>
        <end position="101"/>
    </location>
</feature>
<feature type="helix" evidence="7">
    <location>
        <begin position="106"/>
        <end position="108"/>
    </location>
</feature>
<feature type="strand" evidence="7">
    <location>
        <begin position="109"/>
        <end position="113"/>
    </location>
</feature>
<feature type="strand" evidence="9">
    <location>
        <begin position="116"/>
        <end position="118"/>
    </location>
</feature>
<feature type="helix" evidence="7">
    <location>
        <begin position="120"/>
        <end position="123"/>
    </location>
</feature>
<feature type="strand" evidence="8">
    <location>
        <begin position="137"/>
        <end position="141"/>
    </location>
</feature>
<feature type="helix" evidence="7">
    <location>
        <begin position="143"/>
        <end position="145"/>
    </location>
</feature>
<feature type="strand" evidence="7">
    <location>
        <begin position="146"/>
        <end position="153"/>
    </location>
</feature>
<feature type="helix" evidence="7">
    <location>
        <begin position="154"/>
        <end position="160"/>
    </location>
</feature>
<feature type="strand" evidence="7">
    <location>
        <begin position="165"/>
        <end position="173"/>
    </location>
</feature>
<feature type="strand" evidence="7">
    <location>
        <begin position="181"/>
        <end position="193"/>
    </location>
</feature>
<feature type="strand" evidence="7">
    <location>
        <begin position="199"/>
        <end position="225"/>
    </location>
</feature>
<feature type="turn" evidence="7">
    <location>
        <begin position="230"/>
        <end position="236"/>
    </location>
</feature>
<feature type="helix" evidence="7">
    <location>
        <begin position="242"/>
        <end position="244"/>
    </location>
</feature>
<feature type="strand" evidence="7">
    <location>
        <begin position="254"/>
        <end position="267"/>
    </location>
</feature>
<feature type="strand" evidence="7">
    <location>
        <begin position="272"/>
        <end position="286"/>
    </location>
</feature>
<feature type="strand" evidence="7">
    <location>
        <begin position="292"/>
        <end position="294"/>
    </location>
</feature>
<feature type="helix" evidence="7">
    <location>
        <begin position="298"/>
        <end position="303"/>
    </location>
</feature>
<feature type="strand" evidence="7">
    <location>
        <begin position="309"/>
        <end position="323"/>
    </location>
</feature>
<feature type="strand" evidence="7">
    <location>
        <begin position="328"/>
        <end position="343"/>
    </location>
</feature>
<feature type="strand" evidence="7">
    <location>
        <begin position="345"/>
        <end position="348"/>
    </location>
</feature>
<feature type="helix" evidence="7">
    <location>
        <begin position="349"/>
        <end position="351"/>
    </location>
</feature>
<feature type="helix" evidence="8">
    <location>
        <begin position="357"/>
        <end position="359"/>
    </location>
</feature>
<feature type="strand" evidence="7">
    <location>
        <begin position="361"/>
        <end position="380"/>
    </location>
</feature>
<feature type="strand" evidence="7">
    <location>
        <begin position="382"/>
        <end position="400"/>
    </location>
</feature>
<feature type="turn" evidence="7">
    <location>
        <begin position="402"/>
        <end position="405"/>
    </location>
</feature>
<feature type="turn" evidence="7">
    <location>
        <begin position="410"/>
        <end position="412"/>
    </location>
</feature>
<feature type="strand" evidence="8">
    <location>
        <begin position="420"/>
        <end position="422"/>
    </location>
</feature>
<feature type="strand" evidence="7">
    <location>
        <begin position="425"/>
        <end position="443"/>
    </location>
</feature>
<feature type="strand" evidence="7">
    <location>
        <begin position="446"/>
        <end position="457"/>
    </location>
</feature>
<feature type="turn" evidence="7">
    <location>
        <begin position="458"/>
        <end position="460"/>
    </location>
</feature>
<feature type="strand" evidence="7">
    <location>
        <begin position="461"/>
        <end position="475"/>
    </location>
</feature>
<feature type="strand" evidence="7">
    <location>
        <begin position="478"/>
        <end position="489"/>
    </location>
</feature>
<feature type="turn" evidence="7">
    <location>
        <begin position="493"/>
        <end position="496"/>
    </location>
</feature>
<feature type="strand" evidence="7">
    <location>
        <begin position="501"/>
        <end position="506"/>
    </location>
</feature>
<feature type="strand" evidence="7">
    <location>
        <begin position="516"/>
        <end position="519"/>
    </location>
</feature>
<feature type="strand" evidence="7">
    <location>
        <begin position="527"/>
        <end position="540"/>
    </location>
</feature>
<feature type="strand" evidence="7">
    <location>
        <begin position="543"/>
        <end position="560"/>
    </location>
</feature>
<feature type="strand" evidence="7">
    <location>
        <begin position="565"/>
        <end position="567"/>
    </location>
</feature>
<feature type="helix" evidence="7">
    <location>
        <begin position="573"/>
        <end position="575"/>
    </location>
</feature>
<feature type="strand" evidence="7">
    <location>
        <begin position="579"/>
        <end position="603"/>
    </location>
</feature>
<feature type="strand" evidence="7">
    <location>
        <begin position="606"/>
        <end position="620"/>
    </location>
</feature>
<feature type="turn" evidence="7">
    <location>
        <begin position="621"/>
        <end position="623"/>
    </location>
</feature>
<feature type="strand" evidence="7">
    <location>
        <begin position="626"/>
        <end position="628"/>
    </location>
</feature>
<feature type="strand" evidence="7">
    <location>
        <begin position="632"/>
        <end position="641"/>
    </location>
</feature>
<feature type="strand" evidence="7">
    <location>
        <begin position="644"/>
        <end position="656"/>
    </location>
</feature>
<feature type="strand" evidence="8">
    <location>
        <begin position="666"/>
        <end position="670"/>
    </location>
</feature>
<feature type="helix" evidence="7">
    <location>
        <begin position="673"/>
        <end position="676"/>
    </location>
</feature>
<feature type="strand" evidence="7">
    <location>
        <begin position="682"/>
        <end position="694"/>
    </location>
</feature>
<feature type="strand" evidence="7">
    <location>
        <begin position="697"/>
        <end position="705"/>
    </location>
</feature>
<feature type="strand" evidence="10">
    <location>
        <begin position="721"/>
        <end position="723"/>
    </location>
</feature>
<feature type="strand" evidence="7">
    <location>
        <begin position="737"/>
        <end position="745"/>
    </location>
</feature>
<reference key="1">
    <citation type="journal article" date="1993" name="J. Bacteriol.">
        <title>Cloning and characterization of the ferric enterobactin receptor gene (pfeA) of Pseudomonas aeruginosa.</title>
        <authorList>
            <person name="Dean C.R."/>
            <person name="Poole K."/>
        </authorList>
    </citation>
    <scope>NUCLEOTIDE SEQUENCE [GENOMIC DNA]</scope>
    <scope>FUNCTION</scope>
    <source>
        <strain>K407</strain>
    </source>
</reference>
<reference key="2">
    <citation type="journal article" date="2000" name="Nature">
        <title>Complete genome sequence of Pseudomonas aeruginosa PAO1, an opportunistic pathogen.</title>
        <authorList>
            <person name="Stover C.K."/>
            <person name="Pham X.-Q.T."/>
            <person name="Erwin A.L."/>
            <person name="Mizoguchi S.D."/>
            <person name="Warrener P."/>
            <person name="Hickey M.J."/>
            <person name="Brinkman F.S.L."/>
            <person name="Hufnagle W.O."/>
            <person name="Kowalik D.J."/>
            <person name="Lagrou M."/>
            <person name="Garber R.L."/>
            <person name="Goltry L."/>
            <person name="Tolentino E."/>
            <person name="Westbrock-Wadman S."/>
            <person name="Yuan Y."/>
            <person name="Brody L.L."/>
            <person name="Coulter S.N."/>
            <person name="Folger K.R."/>
            <person name="Kas A."/>
            <person name="Larbig K."/>
            <person name="Lim R.M."/>
            <person name="Smith K.A."/>
            <person name="Spencer D.H."/>
            <person name="Wong G.K.-S."/>
            <person name="Wu Z."/>
            <person name="Paulsen I.T."/>
            <person name="Reizer J."/>
            <person name="Saier M.H. Jr."/>
            <person name="Hancock R.E.W."/>
            <person name="Lory S."/>
            <person name="Olson M.V."/>
        </authorList>
    </citation>
    <scope>NUCLEOTIDE SEQUENCE [LARGE SCALE GENOMIC DNA]</scope>
    <source>
        <strain>ATCC 15692 / DSM 22644 / CIP 104116 / JCM 14847 / LMG 12228 / 1C / PRS 101 / PAO1</strain>
    </source>
</reference>
<reference evidence="6" key="3">
    <citation type="journal article" date="2005" name="FEMS Microbiol. Lett.">
        <title>The Pseudomonas aeruginosa pirA gene encodes a second receptor for ferrienterobactin and synthetic catecholate analogues.</title>
        <authorList>
            <person name="Ghysels B."/>
            <person name="Ochsner U."/>
            <person name="Moellman U."/>
            <person name="Heinisch L."/>
            <person name="Vasil M."/>
            <person name="Cornelis P."/>
            <person name="Matthijs S."/>
        </authorList>
    </citation>
    <scope>FUNCTION</scope>
    <scope>DISRUPTION PHENOTYPE</scope>
</reference>
<organism>
    <name type="scientific">Pseudomonas aeruginosa (strain ATCC 15692 / DSM 22644 / CIP 104116 / JCM 14847 / LMG 12228 / 1C / PRS 101 / PAO1)</name>
    <dbReference type="NCBI Taxonomy" id="208964"/>
    <lineage>
        <taxon>Bacteria</taxon>
        <taxon>Pseudomonadati</taxon>
        <taxon>Pseudomonadota</taxon>
        <taxon>Gammaproteobacteria</taxon>
        <taxon>Pseudomonadales</taxon>
        <taxon>Pseudomonadaceae</taxon>
        <taxon>Pseudomonas</taxon>
    </lineage>
</organism>
<proteinExistence type="evidence at protein level"/>